<proteinExistence type="inferred from homology"/>
<dbReference type="EC" id="2.4.2.17"/>
<dbReference type="EMBL" id="CP001074">
    <property type="protein sequence ID" value="ACE89894.1"/>
    <property type="molecule type" value="Genomic_DNA"/>
</dbReference>
<dbReference type="SMR" id="B3PRB1"/>
<dbReference type="KEGG" id="rec:RHECIAT_CH0000909"/>
<dbReference type="eggNOG" id="COG0040">
    <property type="taxonomic scope" value="Bacteria"/>
</dbReference>
<dbReference type="HOGENOM" id="CLU_038115_0_1_5"/>
<dbReference type="UniPathway" id="UPA00031">
    <property type="reaction ID" value="UER00006"/>
</dbReference>
<dbReference type="Proteomes" id="UP000008817">
    <property type="component" value="Chromosome"/>
</dbReference>
<dbReference type="GO" id="GO:0005737">
    <property type="term" value="C:cytoplasm"/>
    <property type="evidence" value="ECO:0007669"/>
    <property type="project" value="UniProtKB-SubCell"/>
</dbReference>
<dbReference type="GO" id="GO:0005524">
    <property type="term" value="F:ATP binding"/>
    <property type="evidence" value="ECO:0007669"/>
    <property type="project" value="UniProtKB-KW"/>
</dbReference>
<dbReference type="GO" id="GO:0003879">
    <property type="term" value="F:ATP phosphoribosyltransferase activity"/>
    <property type="evidence" value="ECO:0007669"/>
    <property type="project" value="UniProtKB-EC"/>
</dbReference>
<dbReference type="GO" id="GO:0000105">
    <property type="term" value="P:L-histidine biosynthetic process"/>
    <property type="evidence" value="ECO:0007669"/>
    <property type="project" value="UniProtKB-UniPathway"/>
</dbReference>
<dbReference type="CDD" id="cd13593">
    <property type="entry name" value="PBP2_HisGL3"/>
    <property type="match status" value="1"/>
</dbReference>
<dbReference type="Gene3D" id="3.40.190.10">
    <property type="entry name" value="Periplasmic binding protein-like II"/>
    <property type="match status" value="2"/>
</dbReference>
<dbReference type="InterPro" id="IPR013820">
    <property type="entry name" value="ATP_PRibTrfase_cat"/>
</dbReference>
<dbReference type="InterPro" id="IPR018198">
    <property type="entry name" value="ATP_PRibTrfase_CS"/>
</dbReference>
<dbReference type="InterPro" id="IPR001348">
    <property type="entry name" value="ATP_PRibTrfase_HisG"/>
</dbReference>
<dbReference type="NCBIfam" id="TIGR00070">
    <property type="entry name" value="hisG"/>
    <property type="match status" value="1"/>
</dbReference>
<dbReference type="PANTHER" id="PTHR21403:SF8">
    <property type="entry name" value="ATP PHOSPHORIBOSYLTRANSFERASE"/>
    <property type="match status" value="1"/>
</dbReference>
<dbReference type="PANTHER" id="PTHR21403">
    <property type="entry name" value="ATP PHOSPHORIBOSYLTRANSFERASE ATP-PRTASE"/>
    <property type="match status" value="1"/>
</dbReference>
<dbReference type="Pfam" id="PF01634">
    <property type="entry name" value="HisG"/>
    <property type="match status" value="1"/>
</dbReference>
<dbReference type="SUPFAM" id="SSF53850">
    <property type="entry name" value="Periplasmic binding protein-like II"/>
    <property type="match status" value="1"/>
</dbReference>
<dbReference type="PROSITE" id="PS01316">
    <property type="entry name" value="ATP_P_PHORIBOSYLTR"/>
    <property type="match status" value="1"/>
</dbReference>
<reference key="1">
    <citation type="journal article" date="2010" name="Appl. Environ. Microbiol.">
        <title>Conserved symbiotic plasmid DNA sequences in the multireplicon pangenomic structure of Rhizobium etli.</title>
        <authorList>
            <person name="Gonzalez V."/>
            <person name="Acosta J.L."/>
            <person name="Santamaria R.I."/>
            <person name="Bustos P."/>
            <person name="Fernandez J.L."/>
            <person name="Hernandez Gonzalez I.L."/>
            <person name="Diaz R."/>
            <person name="Flores M."/>
            <person name="Palacios R."/>
            <person name="Mora J."/>
            <person name="Davila G."/>
        </authorList>
    </citation>
    <scope>NUCLEOTIDE SEQUENCE [LARGE SCALE GENOMIC DNA]</scope>
    <source>
        <strain>CIAT 652</strain>
    </source>
</reference>
<keyword id="KW-0028">Amino-acid biosynthesis</keyword>
<keyword id="KW-0067">ATP-binding</keyword>
<keyword id="KW-0963">Cytoplasm</keyword>
<keyword id="KW-0328">Glycosyltransferase</keyword>
<keyword id="KW-0368">Histidine biosynthesis</keyword>
<keyword id="KW-0547">Nucleotide-binding</keyword>
<keyword id="KW-0808">Transferase</keyword>
<comment type="function">
    <text evidence="1">Catalyzes the condensation of ATP and 5-phosphoribose 1-diphosphate to form N'-(5'-phosphoribosyl)-ATP (PR-ATP). Has a crucial role in the pathway because the rate of histidine biosynthesis seems to be controlled primarily by regulation of HisG enzymatic activity (By similarity).</text>
</comment>
<comment type="catalytic activity">
    <reaction>
        <text>1-(5-phospho-beta-D-ribosyl)-ATP + diphosphate = 5-phospho-alpha-D-ribose 1-diphosphate + ATP</text>
        <dbReference type="Rhea" id="RHEA:18473"/>
        <dbReference type="ChEBI" id="CHEBI:30616"/>
        <dbReference type="ChEBI" id="CHEBI:33019"/>
        <dbReference type="ChEBI" id="CHEBI:58017"/>
        <dbReference type="ChEBI" id="CHEBI:73183"/>
        <dbReference type="EC" id="2.4.2.17"/>
    </reaction>
</comment>
<comment type="pathway">
    <text>Amino-acid biosynthesis; L-histidine biosynthesis; L-histidine from 5-phospho-alpha-D-ribose 1-diphosphate: step 1/9.</text>
</comment>
<comment type="subunit">
    <text evidence="1">Heteromultimer composed of HisG and HisZ subunits.</text>
</comment>
<comment type="subcellular location">
    <subcellularLocation>
        <location evidence="1">Cytoplasm</location>
    </subcellularLocation>
</comment>
<comment type="domain">
    <text>Lacks the C-terminal regulatory region which is replaced by HisZ.</text>
</comment>
<comment type="similarity">
    <text evidence="2">Belongs to the ATP phosphoribosyltransferase family. Short subfamily.</text>
</comment>
<sequence>MTITIALPSKGRMKDDASAIFERAGMPITAVGNDRSYRGRVEGWDDVEVAFLSASEISRELGNGTVDFGVTGEDLMREGFAEVDKRVEFCARLGFGHADVVVAVPEIWLDVETMADLGDVAADFRARHSRRLAIATKYWRLTQQFFSSQHGIQLYRIVESLGATEGAPASGSADIIVDITSTGSTLRANHLKVLQDGVILHSQACLVRARKESHADEPVVQAIIEAVRAAL</sequence>
<feature type="chain" id="PRO_1000135291" description="ATP phosphoribosyltransferase">
    <location>
        <begin position="1"/>
        <end position="231"/>
    </location>
</feature>
<gene>
    <name type="primary">hisG</name>
    <name type="ordered locus">RHECIAT_CH0000909</name>
</gene>
<organism>
    <name type="scientific">Rhizobium etli (strain CIAT 652)</name>
    <dbReference type="NCBI Taxonomy" id="491916"/>
    <lineage>
        <taxon>Bacteria</taxon>
        <taxon>Pseudomonadati</taxon>
        <taxon>Pseudomonadota</taxon>
        <taxon>Alphaproteobacteria</taxon>
        <taxon>Hyphomicrobiales</taxon>
        <taxon>Rhizobiaceae</taxon>
        <taxon>Rhizobium/Agrobacterium group</taxon>
        <taxon>Rhizobium</taxon>
    </lineage>
</organism>
<protein>
    <recommendedName>
        <fullName>ATP phosphoribosyltransferase</fullName>
        <shortName>ATP-PRT</shortName>
        <shortName>ATP-PRTase</shortName>
        <ecNumber>2.4.2.17</ecNumber>
    </recommendedName>
</protein>
<name>HIS1_RHIE6</name>
<evidence type="ECO:0000250" key="1"/>
<evidence type="ECO:0000305" key="2"/>
<accession>B3PRB1</accession>